<protein>
    <recommendedName>
        <fullName evidence="1">Large ribosomal subunit protein uL3</fullName>
    </recommendedName>
    <alternativeName>
        <fullName evidence="2">50S ribosomal protein L3</fullName>
    </alternativeName>
</protein>
<accession>A1VEB6</accession>
<reference key="1">
    <citation type="journal article" date="2009" name="Environ. Microbiol.">
        <title>Contribution of mobile genetic elements to Desulfovibrio vulgaris genome plasticity.</title>
        <authorList>
            <person name="Walker C.B."/>
            <person name="Stolyar S."/>
            <person name="Chivian D."/>
            <person name="Pinel N."/>
            <person name="Gabster J.A."/>
            <person name="Dehal P.S."/>
            <person name="He Z."/>
            <person name="Yang Z.K."/>
            <person name="Yen H.C."/>
            <person name="Zhou J."/>
            <person name="Wall J.D."/>
            <person name="Hazen T.C."/>
            <person name="Arkin A.P."/>
            <person name="Stahl D.A."/>
        </authorList>
    </citation>
    <scope>NUCLEOTIDE SEQUENCE [LARGE SCALE GENOMIC DNA]</scope>
    <source>
        <strain>DP4</strain>
    </source>
</reference>
<keyword id="KW-0687">Ribonucleoprotein</keyword>
<keyword id="KW-0689">Ribosomal protein</keyword>
<keyword id="KW-0694">RNA-binding</keyword>
<keyword id="KW-0699">rRNA-binding</keyword>
<name>RL3_NITV4</name>
<sequence>MAEKMGILGRKIGVTRIFASDGSAVAVTVIKAGPCPVTQVKTVATDGYDAIQIAFDEAKEKHLNKPEIGHLAKAGKGLFRTLREIRLEAPAAYEVGSELDVTLFATGDRVKVSGTSIGKGYQGVMRRWNFAGSKDTHGCEKVHRSGGSIGNNTFPGHVFKGKKMAGHWGNESVTVLNLEVVDVRPEDNVILVKGSVPGPKNGLVMVRKQ</sequence>
<dbReference type="EMBL" id="CP000527">
    <property type="protein sequence ID" value="ABM28782.1"/>
    <property type="molecule type" value="Genomic_DNA"/>
</dbReference>
<dbReference type="RefSeq" id="WP_010938598.1">
    <property type="nucleotide sequence ID" value="NC_008751.1"/>
</dbReference>
<dbReference type="SMR" id="A1VEB6"/>
<dbReference type="KEGG" id="dvl:Dvul_1765"/>
<dbReference type="HOGENOM" id="CLU_044142_4_1_7"/>
<dbReference type="Proteomes" id="UP000009173">
    <property type="component" value="Chromosome"/>
</dbReference>
<dbReference type="GO" id="GO:0022625">
    <property type="term" value="C:cytosolic large ribosomal subunit"/>
    <property type="evidence" value="ECO:0007669"/>
    <property type="project" value="TreeGrafter"/>
</dbReference>
<dbReference type="GO" id="GO:0019843">
    <property type="term" value="F:rRNA binding"/>
    <property type="evidence" value="ECO:0007669"/>
    <property type="project" value="UniProtKB-UniRule"/>
</dbReference>
<dbReference type="GO" id="GO:0003735">
    <property type="term" value="F:structural constituent of ribosome"/>
    <property type="evidence" value="ECO:0007669"/>
    <property type="project" value="InterPro"/>
</dbReference>
<dbReference type="GO" id="GO:0006412">
    <property type="term" value="P:translation"/>
    <property type="evidence" value="ECO:0007669"/>
    <property type="project" value="UniProtKB-UniRule"/>
</dbReference>
<dbReference type="FunFam" id="2.40.30.10:FF:000004">
    <property type="entry name" value="50S ribosomal protein L3"/>
    <property type="match status" value="1"/>
</dbReference>
<dbReference type="FunFam" id="3.30.160.810:FF:000001">
    <property type="entry name" value="50S ribosomal protein L3"/>
    <property type="match status" value="1"/>
</dbReference>
<dbReference type="Gene3D" id="3.30.160.810">
    <property type="match status" value="1"/>
</dbReference>
<dbReference type="Gene3D" id="2.40.30.10">
    <property type="entry name" value="Translation factors"/>
    <property type="match status" value="1"/>
</dbReference>
<dbReference type="HAMAP" id="MF_01325_B">
    <property type="entry name" value="Ribosomal_uL3_B"/>
    <property type="match status" value="1"/>
</dbReference>
<dbReference type="InterPro" id="IPR000597">
    <property type="entry name" value="Ribosomal_uL3"/>
</dbReference>
<dbReference type="InterPro" id="IPR019927">
    <property type="entry name" value="Ribosomal_uL3_bac/org-type"/>
</dbReference>
<dbReference type="InterPro" id="IPR009000">
    <property type="entry name" value="Transl_B-barrel_sf"/>
</dbReference>
<dbReference type="NCBIfam" id="TIGR03625">
    <property type="entry name" value="L3_bact"/>
    <property type="match status" value="1"/>
</dbReference>
<dbReference type="PANTHER" id="PTHR11229">
    <property type="entry name" value="50S RIBOSOMAL PROTEIN L3"/>
    <property type="match status" value="1"/>
</dbReference>
<dbReference type="PANTHER" id="PTHR11229:SF16">
    <property type="entry name" value="LARGE RIBOSOMAL SUBUNIT PROTEIN UL3C"/>
    <property type="match status" value="1"/>
</dbReference>
<dbReference type="Pfam" id="PF00297">
    <property type="entry name" value="Ribosomal_L3"/>
    <property type="match status" value="1"/>
</dbReference>
<dbReference type="SUPFAM" id="SSF50447">
    <property type="entry name" value="Translation proteins"/>
    <property type="match status" value="1"/>
</dbReference>
<gene>
    <name evidence="1" type="primary">rplC</name>
    <name type="ordered locus">Dvul_1765</name>
</gene>
<feature type="chain" id="PRO_1000052041" description="Large ribosomal subunit protein uL3">
    <location>
        <begin position="1"/>
        <end position="209"/>
    </location>
</feature>
<evidence type="ECO:0000255" key="1">
    <source>
        <dbReference type="HAMAP-Rule" id="MF_01325"/>
    </source>
</evidence>
<evidence type="ECO:0000305" key="2"/>
<organism>
    <name type="scientific">Nitratidesulfovibrio vulgaris (strain DP4)</name>
    <name type="common">Desulfovibrio vulgaris</name>
    <dbReference type="NCBI Taxonomy" id="391774"/>
    <lineage>
        <taxon>Bacteria</taxon>
        <taxon>Pseudomonadati</taxon>
        <taxon>Thermodesulfobacteriota</taxon>
        <taxon>Desulfovibrionia</taxon>
        <taxon>Desulfovibrionales</taxon>
        <taxon>Desulfovibrionaceae</taxon>
        <taxon>Nitratidesulfovibrio</taxon>
    </lineage>
</organism>
<proteinExistence type="inferred from homology"/>
<comment type="function">
    <text evidence="1">One of the primary rRNA binding proteins, it binds directly near the 3'-end of the 23S rRNA, where it nucleates assembly of the 50S subunit.</text>
</comment>
<comment type="subunit">
    <text evidence="1">Part of the 50S ribosomal subunit. Forms a cluster with proteins L14 and L19.</text>
</comment>
<comment type="similarity">
    <text evidence="1">Belongs to the universal ribosomal protein uL3 family.</text>
</comment>